<accession>Q8ETY8</accession>
<name>RPOB_OCEIH</name>
<keyword id="KW-0240">DNA-directed RNA polymerase</keyword>
<keyword id="KW-0548">Nucleotidyltransferase</keyword>
<keyword id="KW-1185">Reference proteome</keyword>
<keyword id="KW-0804">Transcription</keyword>
<keyword id="KW-0808">Transferase</keyword>
<dbReference type="EC" id="2.7.7.6" evidence="1"/>
<dbReference type="EMBL" id="BA000028">
    <property type="protein sequence ID" value="BAC12068.1"/>
    <property type="molecule type" value="Genomic_DNA"/>
</dbReference>
<dbReference type="RefSeq" id="WP_011064515.1">
    <property type="nucleotide sequence ID" value="NC_004193.1"/>
</dbReference>
<dbReference type="SMR" id="Q8ETY8"/>
<dbReference type="STRING" id="221109.gene:10732302"/>
<dbReference type="KEGG" id="oih:OB0112"/>
<dbReference type="eggNOG" id="COG0085">
    <property type="taxonomic scope" value="Bacteria"/>
</dbReference>
<dbReference type="HOGENOM" id="CLU_000524_4_0_9"/>
<dbReference type="OrthoDB" id="9803954at2"/>
<dbReference type="PhylomeDB" id="Q8ETY8"/>
<dbReference type="Proteomes" id="UP000000822">
    <property type="component" value="Chromosome"/>
</dbReference>
<dbReference type="GO" id="GO:0000428">
    <property type="term" value="C:DNA-directed RNA polymerase complex"/>
    <property type="evidence" value="ECO:0007669"/>
    <property type="project" value="UniProtKB-KW"/>
</dbReference>
<dbReference type="GO" id="GO:0003677">
    <property type="term" value="F:DNA binding"/>
    <property type="evidence" value="ECO:0007669"/>
    <property type="project" value="UniProtKB-UniRule"/>
</dbReference>
<dbReference type="GO" id="GO:0003899">
    <property type="term" value="F:DNA-directed RNA polymerase activity"/>
    <property type="evidence" value="ECO:0007669"/>
    <property type="project" value="UniProtKB-UniRule"/>
</dbReference>
<dbReference type="GO" id="GO:0032549">
    <property type="term" value="F:ribonucleoside binding"/>
    <property type="evidence" value="ECO:0007669"/>
    <property type="project" value="InterPro"/>
</dbReference>
<dbReference type="GO" id="GO:0006351">
    <property type="term" value="P:DNA-templated transcription"/>
    <property type="evidence" value="ECO:0007669"/>
    <property type="project" value="UniProtKB-UniRule"/>
</dbReference>
<dbReference type="CDD" id="cd00653">
    <property type="entry name" value="RNA_pol_B_RPB2"/>
    <property type="match status" value="1"/>
</dbReference>
<dbReference type="FunFam" id="3.90.1800.10:FF:000001">
    <property type="entry name" value="DNA-directed RNA polymerase subunit beta"/>
    <property type="match status" value="1"/>
</dbReference>
<dbReference type="Gene3D" id="2.40.50.100">
    <property type="match status" value="1"/>
</dbReference>
<dbReference type="Gene3D" id="2.40.50.150">
    <property type="match status" value="1"/>
</dbReference>
<dbReference type="Gene3D" id="3.90.1100.10">
    <property type="match status" value="2"/>
</dbReference>
<dbReference type="Gene3D" id="2.30.150.10">
    <property type="entry name" value="DNA-directed RNA polymerase, beta subunit, external 1 domain"/>
    <property type="match status" value="1"/>
</dbReference>
<dbReference type="Gene3D" id="2.40.270.10">
    <property type="entry name" value="DNA-directed RNA polymerase, subunit 2, domain 6"/>
    <property type="match status" value="1"/>
</dbReference>
<dbReference type="Gene3D" id="3.90.1800.10">
    <property type="entry name" value="RNA polymerase alpha subunit dimerisation domain"/>
    <property type="match status" value="1"/>
</dbReference>
<dbReference type="Gene3D" id="3.90.1110.10">
    <property type="entry name" value="RNA polymerase Rpb2, domain 2"/>
    <property type="match status" value="1"/>
</dbReference>
<dbReference type="HAMAP" id="MF_01321">
    <property type="entry name" value="RNApol_bact_RpoB"/>
    <property type="match status" value="1"/>
</dbReference>
<dbReference type="InterPro" id="IPR042107">
    <property type="entry name" value="DNA-dir_RNA_pol_bsu_ext_1_sf"/>
</dbReference>
<dbReference type="InterPro" id="IPR019462">
    <property type="entry name" value="DNA-dir_RNA_pol_bsu_external_1"/>
</dbReference>
<dbReference type="InterPro" id="IPR015712">
    <property type="entry name" value="DNA-dir_RNA_pol_su2"/>
</dbReference>
<dbReference type="InterPro" id="IPR007120">
    <property type="entry name" value="DNA-dir_RNAP_su2_dom"/>
</dbReference>
<dbReference type="InterPro" id="IPR037033">
    <property type="entry name" value="DNA-dir_RNAP_su2_hyb_sf"/>
</dbReference>
<dbReference type="InterPro" id="IPR010243">
    <property type="entry name" value="RNA_pol_bsu_bac"/>
</dbReference>
<dbReference type="InterPro" id="IPR007121">
    <property type="entry name" value="RNA_pol_bsu_CS"/>
</dbReference>
<dbReference type="InterPro" id="IPR007644">
    <property type="entry name" value="RNA_pol_bsu_protrusion"/>
</dbReference>
<dbReference type="InterPro" id="IPR007642">
    <property type="entry name" value="RNA_pol_Rpb2_2"/>
</dbReference>
<dbReference type="InterPro" id="IPR037034">
    <property type="entry name" value="RNA_pol_Rpb2_2_sf"/>
</dbReference>
<dbReference type="InterPro" id="IPR007645">
    <property type="entry name" value="RNA_pol_Rpb2_3"/>
</dbReference>
<dbReference type="InterPro" id="IPR007641">
    <property type="entry name" value="RNA_pol_Rpb2_7"/>
</dbReference>
<dbReference type="InterPro" id="IPR014724">
    <property type="entry name" value="RNA_pol_RPB2_OB-fold"/>
</dbReference>
<dbReference type="NCBIfam" id="NF001616">
    <property type="entry name" value="PRK00405.1"/>
    <property type="match status" value="1"/>
</dbReference>
<dbReference type="NCBIfam" id="TIGR02013">
    <property type="entry name" value="rpoB"/>
    <property type="match status" value="1"/>
</dbReference>
<dbReference type="PANTHER" id="PTHR20856">
    <property type="entry name" value="DNA-DIRECTED RNA POLYMERASE I SUBUNIT 2"/>
    <property type="match status" value="1"/>
</dbReference>
<dbReference type="Pfam" id="PF04563">
    <property type="entry name" value="RNA_pol_Rpb2_1"/>
    <property type="match status" value="1"/>
</dbReference>
<dbReference type="Pfam" id="PF04561">
    <property type="entry name" value="RNA_pol_Rpb2_2"/>
    <property type="match status" value="2"/>
</dbReference>
<dbReference type="Pfam" id="PF04565">
    <property type="entry name" value="RNA_pol_Rpb2_3"/>
    <property type="match status" value="1"/>
</dbReference>
<dbReference type="Pfam" id="PF10385">
    <property type="entry name" value="RNA_pol_Rpb2_45"/>
    <property type="match status" value="1"/>
</dbReference>
<dbReference type="Pfam" id="PF00562">
    <property type="entry name" value="RNA_pol_Rpb2_6"/>
    <property type="match status" value="1"/>
</dbReference>
<dbReference type="Pfam" id="PF04560">
    <property type="entry name" value="RNA_pol_Rpb2_7"/>
    <property type="match status" value="1"/>
</dbReference>
<dbReference type="SUPFAM" id="SSF64484">
    <property type="entry name" value="beta and beta-prime subunits of DNA dependent RNA-polymerase"/>
    <property type="match status" value="1"/>
</dbReference>
<dbReference type="PROSITE" id="PS01166">
    <property type="entry name" value="RNA_POL_BETA"/>
    <property type="match status" value="1"/>
</dbReference>
<evidence type="ECO:0000255" key="1">
    <source>
        <dbReference type="HAMAP-Rule" id="MF_01321"/>
    </source>
</evidence>
<organism>
    <name type="scientific">Oceanobacillus iheyensis (strain DSM 14371 / CIP 107618 / JCM 11309 / KCTC 3954 / HTE831)</name>
    <dbReference type="NCBI Taxonomy" id="221109"/>
    <lineage>
        <taxon>Bacteria</taxon>
        <taxon>Bacillati</taxon>
        <taxon>Bacillota</taxon>
        <taxon>Bacilli</taxon>
        <taxon>Bacillales</taxon>
        <taxon>Bacillaceae</taxon>
        <taxon>Oceanobacillus</taxon>
    </lineage>
</organism>
<comment type="function">
    <text evidence="1">DNA-dependent RNA polymerase catalyzes the transcription of DNA into RNA using the four ribonucleoside triphosphates as substrates.</text>
</comment>
<comment type="catalytic activity">
    <reaction evidence="1">
        <text>RNA(n) + a ribonucleoside 5'-triphosphate = RNA(n+1) + diphosphate</text>
        <dbReference type="Rhea" id="RHEA:21248"/>
        <dbReference type="Rhea" id="RHEA-COMP:14527"/>
        <dbReference type="Rhea" id="RHEA-COMP:17342"/>
        <dbReference type="ChEBI" id="CHEBI:33019"/>
        <dbReference type="ChEBI" id="CHEBI:61557"/>
        <dbReference type="ChEBI" id="CHEBI:140395"/>
        <dbReference type="EC" id="2.7.7.6"/>
    </reaction>
</comment>
<comment type="subunit">
    <text evidence="1">The RNAP catalytic core consists of 2 alpha, 1 beta, 1 beta' and 1 omega subunit. When a sigma factor is associated with the core the holoenzyme is formed, which can initiate transcription.</text>
</comment>
<comment type="similarity">
    <text evidence="1">Belongs to the RNA polymerase beta chain family.</text>
</comment>
<gene>
    <name evidence="1" type="primary">rpoB</name>
    <name type="ordered locus">OB0112</name>
</gene>
<reference key="1">
    <citation type="journal article" date="2002" name="Nucleic Acids Res.">
        <title>Genome sequence of Oceanobacillus iheyensis isolated from the Iheya Ridge and its unexpected adaptive capabilities to extreme environments.</title>
        <authorList>
            <person name="Takami H."/>
            <person name="Takaki Y."/>
            <person name="Uchiyama I."/>
        </authorList>
    </citation>
    <scope>NUCLEOTIDE SEQUENCE [LARGE SCALE GENOMIC DNA]</scope>
    <source>
        <strain>DSM 14371 / CIP 107618 / JCM 11309 / KCTC 3954 / HTE831</strain>
    </source>
</reference>
<protein>
    <recommendedName>
        <fullName evidence="1">DNA-directed RNA polymerase subunit beta</fullName>
        <shortName evidence="1">RNAP subunit beta</shortName>
        <ecNumber evidence="1">2.7.7.6</ecNumber>
    </recommendedName>
    <alternativeName>
        <fullName evidence="1">RNA polymerase subunit beta</fullName>
    </alternativeName>
    <alternativeName>
        <fullName evidence="1">Transcriptase subunit beta</fullName>
    </alternativeName>
</protein>
<sequence>MTGQLVQYGRHRQRRSYARINEVLELPNLIEIQTASYDWFLEEGLREMFQDISPIEDFTGNLSLEFVDYSLGDPKYPVDEAKERDVTYNAPLRVKVRLINNETGEVKEQEVFMGDFPLMTETGTFIINGAERVIVSQLVRSPSVYYNEKIDKNGKRGIGATVIPNRGAWLEFETDAKDIAYVRIDRTRKLPITVLLRALGFGTDQEITDLLGENEYLRNTLEKDNTENAEKALLEIYERLRPGEPPTVENAKSLLVSRFFDPKRYDLAHVGRYKMNKKLHMKNRLFNQILAEPIVDPETGEVIAEKGEKLERKLLDKILPYLERAEDRFGESVLSPHEGVLEDEITIQSVKIIDPTDPNGERELTVIGNGGVTNDVKNITPADILSSISYFFNLLHEVGGTDDIDHLGNRRLRSVGELLQNQFRIGLSRMERVVRERMSIQDTSSVTPQQLINIRPVIASIKEFFGSSQLSQFMDQTNPLGELTHKRRLSALGPGGLTRERAGFEVRDVHYSHYGRMCPIETPEGPNIGLINSLSSYAKVNKFGFIESPYRRVDPETGKVTNKIDYLTADEQDNYIVAQANSPLDEDSRFQNEEVISRFQEDNIVVSRDKIDYMDVSPKQVVSAATACIPFLENDDSNRALMGANMQRQAVPLMKPQAPIVGTGMEYVNGKDSGAAVICHHDGVIERVEAKEVYVRRISIVDGKEVEGDLDRYGLQKYKRSNQGTCYNQRPIVSQGDRVTKGEVLADGPSMEDGELALGQNVLVGFMTWEGYNYEDAIIMSERLVKDDVYTSIHIEEFESEARDTKLGPEEITRDIPNVGEDALKNLDEHGIIRVGAEVTDGDILVGKVTPKGVTELSAEERLLHAIFGEKAREVRDTSLRVPHGGGGIVLDVKIFNREDGDELPPGVNQLVRAYIVQKRKIHEGDKMAGRHGNKGVISKILPEEDMPYLPDGTPIDIMLNPLGVPSRMNIGQVFELHLGMAARQLGIHVASPVFDGAREEDVWETLEEAGMPRDAKTVLYDGRTGEAFDNRVSVGVMYMIKLAHMVDDKLHARSTGPYSLVTQQPLGGKAQFGGQRFGEMEVWALEAYGAAYTLQEILTVKSDDTVGRVKTYEAIVKGDNVPEPGVPESFKVLIKELQSLGMDVKMLSSNEDEIDMRELEEEEVQAATKLNIDVEESE</sequence>
<proteinExistence type="inferred from homology"/>
<feature type="chain" id="PRO_0000047932" description="DNA-directed RNA polymerase subunit beta">
    <location>
        <begin position="1"/>
        <end position="1179"/>
    </location>
</feature>